<gene>
    <name type="ordered locus">At1g58055</name>
    <name type="ORF">T15M6</name>
</gene>
<evidence type="ECO:0000250" key="1"/>
<evidence type="ECO:0000255" key="2"/>
<evidence type="ECO:0000305" key="3"/>
<keyword id="KW-0929">Antimicrobial</keyword>
<keyword id="KW-1015">Disulfide bond</keyword>
<keyword id="KW-0295">Fungicide</keyword>
<keyword id="KW-0611">Plant defense</keyword>
<keyword id="KW-1185">Reference proteome</keyword>
<keyword id="KW-0964">Secreted</keyword>
<keyword id="KW-0732">Signal</keyword>
<organism>
    <name type="scientific">Arabidopsis thaliana</name>
    <name type="common">Mouse-ear cress</name>
    <dbReference type="NCBI Taxonomy" id="3702"/>
    <lineage>
        <taxon>Eukaryota</taxon>
        <taxon>Viridiplantae</taxon>
        <taxon>Streptophyta</taxon>
        <taxon>Embryophyta</taxon>
        <taxon>Tracheophyta</taxon>
        <taxon>Spermatophyta</taxon>
        <taxon>Magnoliopsida</taxon>
        <taxon>eudicotyledons</taxon>
        <taxon>Gunneridae</taxon>
        <taxon>Pentapetalae</taxon>
        <taxon>rosids</taxon>
        <taxon>malvids</taxon>
        <taxon>Brassicales</taxon>
        <taxon>Brassicaceae</taxon>
        <taxon>Camelineae</taxon>
        <taxon>Arabidopsis</taxon>
    </lineage>
</organism>
<sequence>MTTTKTMLVAFVLTLFFVISSVHCSDGTSGYGITEATKRCFTPAPCTRGLFYCQTFCSSLSAVLIGVCESGICCCILNQ</sequence>
<feature type="signal peptide" evidence="2">
    <location>
        <begin position="1"/>
        <end position="24"/>
    </location>
</feature>
<feature type="chain" id="PRO_0000379679" description="Defensin-like protein 117">
    <location>
        <begin position="25"/>
        <end position="79"/>
    </location>
</feature>
<feature type="disulfide bond" evidence="1">
    <location>
        <begin position="40"/>
        <end position="75"/>
    </location>
</feature>
<feature type="disulfide bond" evidence="1">
    <location>
        <begin position="46"/>
        <end position="68"/>
    </location>
</feature>
<feature type="disulfide bond" evidence="1">
    <location>
        <begin position="53"/>
        <end position="73"/>
    </location>
</feature>
<feature type="disulfide bond" evidence="1">
    <location>
        <begin position="57"/>
        <end position="74"/>
    </location>
</feature>
<name>DF117_ARATH</name>
<comment type="subcellular location">
    <subcellularLocation>
        <location evidence="1">Secreted</location>
    </subcellularLocation>
</comment>
<comment type="similarity">
    <text evidence="3">Belongs to the DEFL family.</text>
</comment>
<reference key="1">
    <citation type="journal article" date="2000" name="Nature">
        <title>Sequence and analysis of chromosome 1 of the plant Arabidopsis thaliana.</title>
        <authorList>
            <person name="Theologis A."/>
            <person name="Ecker J.R."/>
            <person name="Palm C.J."/>
            <person name="Federspiel N.A."/>
            <person name="Kaul S."/>
            <person name="White O."/>
            <person name="Alonso J."/>
            <person name="Altafi H."/>
            <person name="Araujo R."/>
            <person name="Bowman C.L."/>
            <person name="Brooks S.Y."/>
            <person name="Buehler E."/>
            <person name="Chan A."/>
            <person name="Chao Q."/>
            <person name="Chen H."/>
            <person name="Cheuk R.F."/>
            <person name="Chin C.W."/>
            <person name="Chung M.K."/>
            <person name="Conn L."/>
            <person name="Conway A.B."/>
            <person name="Conway A.R."/>
            <person name="Creasy T.H."/>
            <person name="Dewar K."/>
            <person name="Dunn P."/>
            <person name="Etgu P."/>
            <person name="Feldblyum T.V."/>
            <person name="Feng J.-D."/>
            <person name="Fong B."/>
            <person name="Fujii C.Y."/>
            <person name="Gill J.E."/>
            <person name="Goldsmith A.D."/>
            <person name="Haas B."/>
            <person name="Hansen N.F."/>
            <person name="Hughes B."/>
            <person name="Huizar L."/>
            <person name="Hunter J.L."/>
            <person name="Jenkins J."/>
            <person name="Johnson-Hopson C."/>
            <person name="Khan S."/>
            <person name="Khaykin E."/>
            <person name="Kim C.J."/>
            <person name="Koo H.L."/>
            <person name="Kremenetskaia I."/>
            <person name="Kurtz D.B."/>
            <person name="Kwan A."/>
            <person name="Lam B."/>
            <person name="Langin-Hooper S."/>
            <person name="Lee A."/>
            <person name="Lee J.M."/>
            <person name="Lenz C.A."/>
            <person name="Li J.H."/>
            <person name="Li Y.-P."/>
            <person name="Lin X."/>
            <person name="Liu S.X."/>
            <person name="Liu Z.A."/>
            <person name="Luros J.S."/>
            <person name="Maiti R."/>
            <person name="Marziali A."/>
            <person name="Militscher J."/>
            <person name="Miranda M."/>
            <person name="Nguyen M."/>
            <person name="Nierman W.C."/>
            <person name="Osborne B.I."/>
            <person name="Pai G."/>
            <person name="Peterson J."/>
            <person name="Pham P.K."/>
            <person name="Rizzo M."/>
            <person name="Rooney T."/>
            <person name="Rowley D."/>
            <person name="Sakano H."/>
            <person name="Salzberg S.L."/>
            <person name="Schwartz J.R."/>
            <person name="Shinn P."/>
            <person name="Southwick A.M."/>
            <person name="Sun H."/>
            <person name="Tallon L.J."/>
            <person name="Tambunga G."/>
            <person name="Toriumi M.J."/>
            <person name="Town C.D."/>
            <person name="Utterback T."/>
            <person name="Van Aken S."/>
            <person name="Vaysberg M."/>
            <person name="Vysotskaia V.S."/>
            <person name="Walker M."/>
            <person name="Wu D."/>
            <person name="Yu G."/>
            <person name="Fraser C.M."/>
            <person name="Venter J.C."/>
            <person name="Davis R.W."/>
        </authorList>
    </citation>
    <scope>NUCLEOTIDE SEQUENCE [LARGE SCALE GENOMIC DNA]</scope>
    <source>
        <strain>cv. Columbia</strain>
    </source>
</reference>
<reference key="2">
    <citation type="journal article" date="2017" name="Plant J.">
        <title>Araport11: a complete reannotation of the Arabidopsis thaliana reference genome.</title>
        <authorList>
            <person name="Cheng C.Y."/>
            <person name="Krishnakumar V."/>
            <person name="Chan A.P."/>
            <person name="Thibaud-Nissen F."/>
            <person name="Schobel S."/>
            <person name="Town C.D."/>
        </authorList>
    </citation>
    <scope>GENOME REANNOTATION</scope>
    <source>
        <strain>cv. Columbia</strain>
    </source>
</reference>
<reference key="3">
    <citation type="journal article" date="2006" name="Plant Biotechnol. J.">
        <title>Simultaneous high-throughput recombinational cloning of open reading frames in closed and open configurations.</title>
        <authorList>
            <person name="Underwood B.A."/>
            <person name="Vanderhaeghen R."/>
            <person name="Whitford R."/>
            <person name="Town C.D."/>
            <person name="Hilson P."/>
        </authorList>
    </citation>
    <scope>NUCLEOTIDE SEQUENCE [LARGE SCALE MRNA]</scope>
    <source>
        <strain>cv. Columbia</strain>
    </source>
</reference>
<reference key="4">
    <citation type="journal article" date="2007" name="Plant J.">
        <title>Small cysteine-rich peptides resembling antimicrobial peptides have been under-predicted in plants.</title>
        <authorList>
            <person name="Silverstein K.A.T."/>
            <person name="Moskal W.A. Jr."/>
            <person name="Wu H.C."/>
            <person name="Underwood B.A."/>
            <person name="Graham M.A."/>
            <person name="Town C.D."/>
            <person name="VandenBosch K.A."/>
        </authorList>
    </citation>
    <scope>NUCLEOTIDE SEQUENCE [LARGE SCALE MRNA]</scope>
    <source>
        <strain>cv. Columbia</strain>
    </source>
</reference>
<reference key="5">
    <citation type="journal article" date="2005" name="Plant Physiol.">
        <title>Genome organization of more than 300 defensin-like genes in Arabidopsis.</title>
        <authorList>
            <person name="Silverstein K.A.T."/>
            <person name="Graham M.A."/>
            <person name="Paape T.D."/>
            <person name="VandenBosch K.A."/>
        </authorList>
    </citation>
    <scope>GENE FAMILY</scope>
</reference>
<proteinExistence type="inferred from homology"/>
<accession>Q2V4G3</accession>
<dbReference type="EMBL" id="AC079604">
    <property type="status" value="NOT_ANNOTATED_CDS"/>
    <property type="molecule type" value="Genomic_DNA"/>
</dbReference>
<dbReference type="EMBL" id="CP002684">
    <property type="protein sequence ID" value="AEE33492.1"/>
    <property type="molecule type" value="Genomic_DNA"/>
</dbReference>
<dbReference type="EMBL" id="DQ912209">
    <property type="protein sequence ID" value="ABI34017.1"/>
    <property type="molecule type" value="mRNA"/>
</dbReference>
<dbReference type="EMBL" id="EF182797">
    <property type="status" value="NOT_ANNOTATED_CDS"/>
    <property type="molecule type" value="mRNA"/>
</dbReference>
<dbReference type="RefSeq" id="NP_001031204.1">
    <property type="nucleotide sequence ID" value="NM_001036127.3"/>
</dbReference>
<dbReference type="PaxDb" id="3702-AT1G58055.1"/>
<dbReference type="ProteomicsDB" id="224256"/>
<dbReference type="EnsemblPlants" id="AT1G58055.1">
    <property type="protein sequence ID" value="AT1G58055.1"/>
    <property type="gene ID" value="AT1G58055"/>
</dbReference>
<dbReference type="GeneID" id="3767564"/>
<dbReference type="Gramene" id="AT1G58055.1">
    <property type="protein sequence ID" value="AT1G58055.1"/>
    <property type="gene ID" value="AT1G58055"/>
</dbReference>
<dbReference type="KEGG" id="ath:AT1G58055"/>
<dbReference type="Araport" id="AT1G58055"/>
<dbReference type="TAIR" id="AT1G58055"/>
<dbReference type="HOGENOM" id="CLU_183259_1_0_1"/>
<dbReference type="InParanoid" id="Q2V4G3"/>
<dbReference type="OMA" id="CESGICC"/>
<dbReference type="PhylomeDB" id="Q2V4G3"/>
<dbReference type="PRO" id="PR:Q2V4G3"/>
<dbReference type="Proteomes" id="UP000006548">
    <property type="component" value="Chromosome 1"/>
</dbReference>
<dbReference type="ExpressionAtlas" id="Q2V4G3">
    <property type="expression patterns" value="baseline and differential"/>
</dbReference>
<dbReference type="GO" id="GO:0005576">
    <property type="term" value="C:extracellular region"/>
    <property type="evidence" value="ECO:0007669"/>
    <property type="project" value="UniProtKB-SubCell"/>
</dbReference>
<dbReference type="GO" id="GO:0050832">
    <property type="term" value="P:defense response to fungus"/>
    <property type="evidence" value="ECO:0007669"/>
    <property type="project" value="UniProtKB-KW"/>
</dbReference>
<dbReference type="GO" id="GO:0031640">
    <property type="term" value="P:killing of cells of another organism"/>
    <property type="evidence" value="ECO:0007669"/>
    <property type="project" value="UniProtKB-KW"/>
</dbReference>
<protein>
    <recommendedName>
        <fullName>Defensin-like protein 117</fullName>
    </recommendedName>
</protein>